<name>FAL1_YEAS7</name>
<comment type="function">
    <text evidence="1">ATP-dependent RNA helicase involved in 40S ribosomal subunit biogenesis. Required for the processing and cleavage of 35S pre-rRNA at sites A0, A1, and A2, leading to mature 18S rRNA (By similarity).</text>
</comment>
<comment type="catalytic activity">
    <reaction>
        <text>ATP + H2O = ADP + phosphate + H(+)</text>
        <dbReference type="Rhea" id="RHEA:13065"/>
        <dbReference type="ChEBI" id="CHEBI:15377"/>
        <dbReference type="ChEBI" id="CHEBI:15378"/>
        <dbReference type="ChEBI" id="CHEBI:30616"/>
        <dbReference type="ChEBI" id="CHEBI:43474"/>
        <dbReference type="ChEBI" id="CHEBI:456216"/>
        <dbReference type="EC" id="3.6.4.13"/>
    </reaction>
</comment>
<comment type="subcellular location">
    <subcellularLocation>
        <location evidence="1">Nucleus</location>
        <location evidence="1">Nucleolus</location>
    </subcellularLocation>
</comment>
<comment type="domain">
    <text>The Q motif is unique to and characteristic of the DEAD box family of RNA helicases and controls ATP binding and hydrolysis.</text>
</comment>
<comment type="similarity">
    <text evidence="4">Belongs to the DEAD box helicase family. DDX48/FAL1 subfamily.</text>
</comment>
<accession>A6ZXY5</accession>
<dbReference type="EC" id="3.6.4.13"/>
<dbReference type="EMBL" id="AAFW02000145">
    <property type="protein sequence ID" value="EDN60365.1"/>
    <property type="molecule type" value="Genomic_DNA"/>
</dbReference>
<dbReference type="SMR" id="A6ZXY5"/>
<dbReference type="HOGENOM" id="CLU_003041_1_0_1"/>
<dbReference type="OrthoDB" id="25602at4893"/>
<dbReference type="Proteomes" id="UP000007060">
    <property type="component" value="Unassembled WGS sequence"/>
</dbReference>
<dbReference type="GO" id="GO:0005730">
    <property type="term" value="C:nucleolus"/>
    <property type="evidence" value="ECO:0007669"/>
    <property type="project" value="UniProtKB-SubCell"/>
</dbReference>
<dbReference type="GO" id="GO:0005524">
    <property type="term" value="F:ATP binding"/>
    <property type="evidence" value="ECO:0007669"/>
    <property type="project" value="UniProtKB-KW"/>
</dbReference>
<dbReference type="GO" id="GO:0016887">
    <property type="term" value="F:ATP hydrolysis activity"/>
    <property type="evidence" value="ECO:0007669"/>
    <property type="project" value="RHEA"/>
</dbReference>
<dbReference type="GO" id="GO:0003723">
    <property type="term" value="F:RNA binding"/>
    <property type="evidence" value="ECO:0007669"/>
    <property type="project" value="UniProtKB-KW"/>
</dbReference>
<dbReference type="GO" id="GO:0003724">
    <property type="term" value="F:RNA helicase activity"/>
    <property type="evidence" value="ECO:0007669"/>
    <property type="project" value="UniProtKB-EC"/>
</dbReference>
<dbReference type="GO" id="GO:0006364">
    <property type="term" value="P:rRNA processing"/>
    <property type="evidence" value="ECO:0007669"/>
    <property type="project" value="UniProtKB-KW"/>
</dbReference>
<dbReference type="CDD" id="cd18787">
    <property type="entry name" value="SF2_C_DEAD"/>
    <property type="match status" value="1"/>
</dbReference>
<dbReference type="FunFam" id="3.40.50.300:FF:000849">
    <property type="entry name" value="ATP-dependent RNA helicase DBP5"/>
    <property type="match status" value="1"/>
</dbReference>
<dbReference type="FunFam" id="3.40.50.300:FF:000031">
    <property type="entry name" value="Eukaryotic initiation factor 4A-III"/>
    <property type="match status" value="1"/>
</dbReference>
<dbReference type="Gene3D" id="3.40.50.300">
    <property type="entry name" value="P-loop containing nucleotide triphosphate hydrolases"/>
    <property type="match status" value="2"/>
</dbReference>
<dbReference type="InterPro" id="IPR011545">
    <property type="entry name" value="DEAD/DEAH_box_helicase_dom"/>
</dbReference>
<dbReference type="InterPro" id="IPR014001">
    <property type="entry name" value="Helicase_ATP-bd"/>
</dbReference>
<dbReference type="InterPro" id="IPR001650">
    <property type="entry name" value="Helicase_C-like"/>
</dbReference>
<dbReference type="InterPro" id="IPR027417">
    <property type="entry name" value="P-loop_NTPase"/>
</dbReference>
<dbReference type="InterPro" id="IPR000629">
    <property type="entry name" value="RNA-helicase_DEAD-box_CS"/>
</dbReference>
<dbReference type="InterPro" id="IPR014014">
    <property type="entry name" value="RNA_helicase_DEAD_Q_motif"/>
</dbReference>
<dbReference type="PANTHER" id="PTHR47958">
    <property type="entry name" value="ATP-DEPENDENT RNA HELICASE DBP3"/>
    <property type="match status" value="1"/>
</dbReference>
<dbReference type="Pfam" id="PF00270">
    <property type="entry name" value="DEAD"/>
    <property type="match status" value="1"/>
</dbReference>
<dbReference type="Pfam" id="PF00271">
    <property type="entry name" value="Helicase_C"/>
    <property type="match status" value="1"/>
</dbReference>
<dbReference type="SMART" id="SM00487">
    <property type="entry name" value="DEXDc"/>
    <property type="match status" value="1"/>
</dbReference>
<dbReference type="SMART" id="SM00490">
    <property type="entry name" value="HELICc"/>
    <property type="match status" value="1"/>
</dbReference>
<dbReference type="SUPFAM" id="SSF52540">
    <property type="entry name" value="P-loop containing nucleoside triphosphate hydrolases"/>
    <property type="match status" value="1"/>
</dbReference>
<dbReference type="PROSITE" id="PS00039">
    <property type="entry name" value="DEAD_ATP_HELICASE"/>
    <property type="match status" value="1"/>
</dbReference>
<dbReference type="PROSITE" id="PS51192">
    <property type="entry name" value="HELICASE_ATP_BIND_1"/>
    <property type="match status" value="1"/>
</dbReference>
<dbReference type="PROSITE" id="PS51194">
    <property type="entry name" value="HELICASE_CTER"/>
    <property type="match status" value="1"/>
</dbReference>
<dbReference type="PROSITE" id="PS51195">
    <property type="entry name" value="Q_MOTIF"/>
    <property type="match status" value="1"/>
</dbReference>
<sequence>MSFDREEDQKLKFKTSKKLKVSSTFESMNLKDDLLRGIYSYGFEAPSSIQSRAITQIISGKDVIAQAQSGTGKTATFTIGLLQAIDLRKKDLQALILSPTRELASQIGQVVKNLGDYMNVNAFAITGGKTLKDDLKKMQKHGCQAVSGTPGRVLDMIKKQMLQTRNVQMLVLDEADELLSETLGFKQQIYDIFAKLPKNCQVVVVSATMNKDILEVTRKFMNDPVKILVKRDEISLEGIKQYVVNVDKEEWKFDTLCDIYDSLTITQCVIFCNTKKKVDWLSQRLIQSNFAVVSMHGDMKQEERDKVMNDFRTGHSRVLISTDVWARGIDVQQVSLVINYDLPEIIENYIHRIGRSGRFGRKGVAINFITKADLAKLREIEKFYSIKINPMPANFAELS</sequence>
<feature type="chain" id="PRO_0000310179" description="ATP-dependent RNA helicase FAL1">
    <location>
        <begin position="1"/>
        <end position="399"/>
    </location>
</feature>
<feature type="domain" description="Helicase ATP-binding" evidence="2">
    <location>
        <begin position="54"/>
        <end position="227"/>
    </location>
</feature>
<feature type="domain" description="Helicase C-terminal" evidence="3">
    <location>
        <begin position="238"/>
        <end position="399"/>
    </location>
</feature>
<feature type="short sequence motif" description="Q motif">
    <location>
        <begin position="23"/>
        <end position="51"/>
    </location>
</feature>
<feature type="short sequence motif" description="DEAD box">
    <location>
        <begin position="173"/>
        <end position="176"/>
    </location>
</feature>
<feature type="binding site" evidence="2">
    <location>
        <begin position="67"/>
        <end position="74"/>
    </location>
    <ligand>
        <name>ATP</name>
        <dbReference type="ChEBI" id="CHEBI:30616"/>
    </ligand>
</feature>
<organism>
    <name type="scientific">Saccharomyces cerevisiae (strain YJM789)</name>
    <name type="common">Baker's yeast</name>
    <dbReference type="NCBI Taxonomy" id="307796"/>
    <lineage>
        <taxon>Eukaryota</taxon>
        <taxon>Fungi</taxon>
        <taxon>Dikarya</taxon>
        <taxon>Ascomycota</taxon>
        <taxon>Saccharomycotina</taxon>
        <taxon>Saccharomycetes</taxon>
        <taxon>Saccharomycetales</taxon>
        <taxon>Saccharomycetaceae</taxon>
        <taxon>Saccharomyces</taxon>
    </lineage>
</organism>
<reference key="1">
    <citation type="journal article" date="2007" name="Proc. Natl. Acad. Sci. U.S.A.">
        <title>Genome sequencing and comparative analysis of Saccharomyces cerevisiae strain YJM789.</title>
        <authorList>
            <person name="Wei W."/>
            <person name="McCusker J.H."/>
            <person name="Hyman R.W."/>
            <person name="Jones T."/>
            <person name="Ning Y."/>
            <person name="Cao Z."/>
            <person name="Gu Z."/>
            <person name="Bruno D."/>
            <person name="Miranda M."/>
            <person name="Nguyen M."/>
            <person name="Wilhelmy J."/>
            <person name="Komp C."/>
            <person name="Tamse R."/>
            <person name="Wang X."/>
            <person name="Jia P."/>
            <person name="Luedi P."/>
            <person name="Oefner P.J."/>
            <person name="David L."/>
            <person name="Dietrich F.S."/>
            <person name="Li Y."/>
            <person name="Davis R.W."/>
            <person name="Steinmetz L.M."/>
        </authorList>
    </citation>
    <scope>NUCLEOTIDE SEQUENCE [LARGE SCALE GENOMIC DNA]</scope>
    <source>
        <strain>YJM789</strain>
    </source>
</reference>
<evidence type="ECO:0000250" key="1"/>
<evidence type="ECO:0000255" key="2">
    <source>
        <dbReference type="PROSITE-ProRule" id="PRU00541"/>
    </source>
</evidence>
<evidence type="ECO:0000255" key="3">
    <source>
        <dbReference type="PROSITE-ProRule" id="PRU00542"/>
    </source>
</evidence>
<evidence type="ECO:0000305" key="4"/>
<protein>
    <recommendedName>
        <fullName>ATP-dependent RNA helicase FAL1</fullName>
        <ecNumber>3.6.4.13</ecNumber>
    </recommendedName>
    <alternativeName>
        <fullName>Translation initiation factor four A-like protein 1</fullName>
    </alternativeName>
</protein>
<gene>
    <name type="primary">FAL1</name>
    <name type="ORF">SCY_0923</name>
</gene>
<proteinExistence type="inferred from homology"/>
<keyword id="KW-0067">ATP-binding</keyword>
<keyword id="KW-0347">Helicase</keyword>
<keyword id="KW-0378">Hydrolase</keyword>
<keyword id="KW-0547">Nucleotide-binding</keyword>
<keyword id="KW-0539">Nucleus</keyword>
<keyword id="KW-0690">Ribosome biogenesis</keyword>
<keyword id="KW-0694">RNA-binding</keyword>
<keyword id="KW-0698">rRNA processing</keyword>